<feature type="chain" id="PRO_0000154753" description="Large ribosomal subunit protein uL10">
    <location>
        <begin position="1"/>
        <end position="165"/>
    </location>
</feature>
<proteinExistence type="inferred from homology"/>
<dbReference type="EMBL" id="AL590842">
    <property type="protein sequence ID" value="CAL22336.1"/>
    <property type="molecule type" value="Genomic_DNA"/>
</dbReference>
<dbReference type="EMBL" id="AE009952">
    <property type="protein sequence ID" value="AAM84071.1"/>
    <property type="molecule type" value="Genomic_DNA"/>
</dbReference>
<dbReference type="EMBL" id="AE017042">
    <property type="protein sequence ID" value="AAS63282.1"/>
    <property type="molecule type" value="Genomic_DNA"/>
</dbReference>
<dbReference type="PIR" id="AE0456">
    <property type="entry name" value="AE0456"/>
</dbReference>
<dbReference type="RefSeq" id="WP_002210674.1">
    <property type="nucleotide sequence ID" value="NZ_WUCM01000099.1"/>
</dbReference>
<dbReference type="RefSeq" id="YP_002348629.1">
    <property type="nucleotide sequence ID" value="NC_003143.1"/>
</dbReference>
<dbReference type="STRING" id="214092.YPO3749"/>
<dbReference type="PaxDb" id="214092-YPO3749"/>
<dbReference type="DNASU" id="1145429"/>
<dbReference type="EnsemblBacteria" id="AAS63282">
    <property type="protein sequence ID" value="AAS63282"/>
    <property type="gene ID" value="YP_3112"/>
</dbReference>
<dbReference type="GeneID" id="96663774"/>
<dbReference type="KEGG" id="ype:YPO3749"/>
<dbReference type="KEGG" id="ypk:y0482"/>
<dbReference type="KEGG" id="ypm:YP_3112"/>
<dbReference type="PATRIC" id="fig|214092.21.peg.4267"/>
<dbReference type="eggNOG" id="COG0244">
    <property type="taxonomic scope" value="Bacteria"/>
</dbReference>
<dbReference type="HOGENOM" id="CLU_092227_0_2_6"/>
<dbReference type="OMA" id="VRDQKQA"/>
<dbReference type="OrthoDB" id="9808307at2"/>
<dbReference type="Proteomes" id="UP000000815">
    <property type="component" value="Chromosome"/>
</dbReference>
<dbReference type="Proteomes" id="UP000001019">
    <property type="component" value="Chromosome"/>
</dbReference>
<dbReference type="Proteomes" id="UP000002490">
    <property type="component" value="Chromosome"/>
</dbReference>
<dbReference type="GO" id="GO:0022625">
    <property type="term" value="C:cytosolic large ribosomal subunit"/>
    <property type="evidence" value="ECO:0000318"/>
    <property type="project" value="GO_Central"/>
</dbReference>
<dbReference type="GO" id="GO:0070180">
    <property type="term" value="F:large ribosomal subunit rRNA binding"/>
    <property type="evidence" value="ECO:0007669"/>
    <property type="project" value="UniProtKB-UniRule"/>
</dbReference>
<dbReference type="GO" id="GO:0003735">
    <property type="term" value="F:structural constituent of ribosome"/>
    <property type="evidence" value="ECO:0000318"/>
    <property type="project" value="GO_Central"/>
</dbReference>
<dbReference type="GO" id="GO:0006412">
    <property type="term" value="P:translation"/>
    <property type="evidence" value="ECO:0000318"/>
    <property type="project" value="GO_Central"/>
</dbReference>
<dbReference type="CDD" id="cd05797">
    <property type="entry name" value="Ribosomal_L10"/>
    <property type="match status" value="1"/>
</dbReference>
<dbReference type="FunFam" id="3.30.70.1730:FF:000001">
    <property type="entry name" value="50S ribosomal protein L10"/>
    <property type="match status" value="1"/>
</dbReference>
<dbReference type="Gene3D" id="3.30.70.1730">
    <property type="match status" value="1"/>
</dbReference>
<dbReference type="Gene3D" id="6.10.250.2350">
    <property type="match status" value="1"/>
</dbReference>
<dbReference type="HAMAP" id="MF_00362">
    <property type="entry name" value="Ribosomal_uL10"/>
    <property type="match status" value="1"/>
</dbReference>
<dbReference type="InterPro" id="IPR001790">
    <property type="entry name" value="Ribosomal_uL10"/>
</dbReference>
<dbReference type="InterPro" id="IPR043141">
    <property type="entry name" value="Ribosomal_uL10-like_sf"/>
</dbReference>
<dbReference type="InterPro" id="IPR022973">
    <property type="entry name" value="Ribosomal_uL10_bac"/>
</dbReference>
<dbReference type="InterPro" id="IPR047865">
    <property type="entry name" value="Ribosomal_uL10_bac_type"/>
</dbReference>
<dbReference type="InterPro" id="IPR002363">
    <property type="entry name" value="Ribosomal_uL10_CS_bac"/>
</dbReference>
<dbReference type="NCBIfam" id="NF000955">
    <property type="entry name" value="PRK00099.1-1"/>
    <property type="match status" value="1"/>
</dbReference>
<dbReference type="PANTHER" id="PTHR11560">
    <property type="entry name" value="39S RIBOSOMAL PROTEIN L10, MITOCHONDRIAL"/>
    <property type="match status" value="1"/>
</dbReference>
<dbReference type="Pfam" id="PF00466">
    <property type="entry name" value="Ribosomal_L10"/>
    <property type="match status" value="1"/>
</dbReference>
<dbReference type="SUPFAM" id="SSF160369">
    <property type="entry name" value="Ribosomal protein L10-like"/>
    <property type="match status" value="1"/>
</dbReference>
<dbReference type="PROSITE" id="PS01109">
    <property type="entry name" value="RIBOSOMAL_L10"/>
    <property type="match status" value="1"/>
</dbReference>
<name>RL10_YERPE</name>
<keyword id="KW-1185">Reference proteome</keyword>
<keyword id="KW-0687">Ribonucleoprotein</keyword>
<keyword id="KW-0689">Ribosomal protein</keyword>
<keyword id="KW-0694">RNA-binding</keyword>
<keyword id="KW-0699">rRNA-binding</keyword>
<gene>
    <name evidence="1" type="primary">rplJ</name>
    <name type="ordered locus">YPO3749</name>
    <name type="ordered locus">y0482</name>
    <name type="ordered locus">YP_3112</name>
</gene>
<reference key="1">
    <citation type="journal article" date="2001" name="Nature">
        <title>Genome sequence of Yersinia pestis, the causative agent of plague.</title>
        <authorList>
            <person name="Parkhill J."/>
            <person name="Wren B.W."/>
            <person name="Thomson N.R."/>
            <person name="Titball R.W."/>
            <person name="Holden M.T.G."/>
            <person name="Prentice M.B."/>
            <person name="Sebaihia M."/>
            <person name="James K.D."/>
            <person name="Churcher C.M."/>
            <person name="Mungall K.L."/>
            <person name="Baker S."/>
            <person name="Basham D."/>
            <person name="Bentley S.D."/>
            <person name="Brooks K."/>
            <person name="Cerdeno-Tarraga A.-M."/>
            <person name="Chillingworth T."/>
            <person name="Cronin A."/>
            <person name="Davies R.M."/>
            <person name="Davis P."/>
            <person name="Dougan G."/>
            <person name="Feltwell T."/>
            <person name="Hamlin N."/>
            <person name="Holroyd S."/>
            <person name="Jagels K."/>
            <person name="Karlyshev A.V."/>
            <person name="Leather S."/>
            <person name="Moule S."/>
            <person name="Oyston P.C.F."/>
            <person name="Quail M.A."/>
            <person name="Rutherford K.M."/>
            <person name="Simmonds M."/>
            <person name="Skelton J."/>
            <person name="Stevens K."/>
            <person name="Whitehead S."/>
            <person name="Barrell B.G."/>
        </authorList>
    </citation>
    <scope>NUCLEOTIDE SEQUENCE [LARGE SCALE GENOMIC DNA]</scope>
    <source>
        <strain>CO-92 / Biovar Orientalis</strain>
    </source>
</reference>
<reference key="2">
    <citation type="journal article" date="2002" name="J. Bacteriol.">
        <title>Genome sequence of Yersinia pestis KIM.</title>
        <authorList>
            <person name="Deng W."/>
            <person name="Burland V."/>
            <person name="Plunkett G. III"/>
            <person name="Boutin A."/>
            <person name="Mayhew G.F."/>
            <person name="Liss P."/>
            <person name="Perna N.T."/>
            <person name="Rose D.J."/>
            <person name="Mau B."/>
            <person name="Zhou S."/>
            <person name="Schwartz D.C."/>
            <person name="Fetherston J.D."/>
            <person name="Lindler L.E."/>
            <person name="Brubaker R.R."/>
            <person name="Plano G.V."/>
            <person name="Straley S.C."/>
            <person name="McDonough K.A."/>
            <person name="Nilles M.L."/>
            <person name="Matson J.S."/>
            <person name="Blattner F.R."/>
            <person name="Perry R.D."/>
        </authorList>
    </citation>
    <scope>NUCLEOTIDE SEQUENCE [LARGE SCALE GENOMIC DNA]</scope>
    <source>
        <strain>KIM10+ / Biovar Mediaevalis</strain>
    </source>
</reference>
<reference key="3">
    <citation type="journal article" date="2004" name="DNA Res.">
        <title>Complete genome sequence of Yersinia pestis strain 91001, an isolate avirulent to humans.</title>
        <authorList>
            <person name="Song Y."/>
            <person name="Tong Z."/>
            <person name="Wang J."/>
            <person name="Wang L."/>
            <person name="Guo Z."/>
            <person name="Han Y."/>
            <person name="Zhang J."/>
            <person name="Pei D."/>
            <person name="Zhou D."/>
            <person name="Qin H."/>
            <person name="Pang X."/>
            <person name="Han Y."/>
            <person name="Zhai J."/>
            <person name="Li M."/>
            <person name="Cui B."/>
            <person name="Qi Z."/>
            <person name="Jin L."/>
            <person name="Dai R."/>
            <person name="Chen F."/>
            <person name="Li S."/>
            <person name="Ye C."/>
            <person name="Du Z."/>
            <person name="Lin W."/>
            <person name="Wang J."/>
            <person name="Yu J."/>
            <person name="Yang H."/>
            <person name="Wang J."/>
            <person name="Huang P."/>
            <person name="Yang R."/>
        </authorList>
    </citation>
    <scope>NUCLEOTIDE SEQUENCE [LARGE SCALE GENOMIC DNA]</scope>
    <source>
        <strain>91001 / Biovar Mediaevalis</strain>
    </source>
</reference>
<sequence length="165" mass="17676">MALNLQGKQAIVAEVKEVAKGALSAVVADSRGVTVDKMTELRRAGREAGVHMQVVRNTLLRRIVEGTPFECLKDTFVGPTLIAFSAEHPGAAARLFKAFAKDNAKFEVKAAAFEGELIPAAQIDRLATLPTYEEAIARLMGTMKEAAAGKLVRTLAALRDQKEAA</sequence>
<accession>Q8ZAP3</accession>
<accession>Q0WAQ9</accession>
<evidence type="ECO:0000255" key="1">
    <source>
        <dbReference type="HAMAP-Rule" id="MF_00362"/>
    </source>
</evidence>
<evidence type="ECO:0000305" key="2"/>
<comment type="function">
    <text evidence="1">Forms part of the ribosomal stalk, playing a central role in the interaction of the ribosome with GTP-bound translation factors.</text>
</comment>
<comment type="subunit">
    <text evidence="1">Part of the ribosomal stalk of the 50S ribosomal subunit. The N-terminus interacts with L11 and the large rRNA to form the base of the stalk. The C-terminus forms an elongated spine to which L12 dimers bind in a sequential fashion forming a multimeric L10(L12)X complex.</text>
</comment>
<comment type="similarity">
    <text evidence="1">Belongs to the universal ribosomal protein uL10 family.</text>
</comment>
<organism>
    <name type="scientific">Yersinia pestis</name>
    <dbReference type="NCBI Taxonomy" id="632"/>
    <lineage>
        <taxon>Bacteria</taxon>
        <taxon>Pseudomonadati</taxon>
        <taxon>Pseudomonadota</taxon>
        <taxon>Gammaproteobacteria</taxon>
        <taxon>Enterobacterales</taxon>
        <taxon>Yersiniaceae</taxon>
        <taxon>Yersinia</taxon>
    </lineage>
</organism>
<protein>
    <recommendedName>
        <fullName evidence="1">Large ribosomal subunit protein uL10</fullName>
    </recommendedName>
    <alternativeName>
        <fullName evidence="2">50S ribosomal protein L10</fullName>
    </alternativeName>
</protein>